<protein>
    <recommendedName>
        <fullName evidence="1">UPF0246 protein CCNA_03496</fullName>
    </recommendedName>
</protein>
<feature type="chain" id="PRO_1000200416" description="UPF0246 protein CCNA_03496">
    <location>
        <begin position="1"/>
        <end position="255"/>
    </location>
</feature>
<organism>
    <name type="scientific">Caulobacter vibrioides (strain NA1000 / CB15N)</name>
    <name type="common">Caulobacter crescentus</name>
    <dbReference type="NCBI Taxonomy" id="565050"/>
    <lineage>
        <taxon>Bacteria</taxon>
        <taxon>Pseudomonadati</taxon>
        <taxon>Pseudomonadota</taxon>
        <taxon>Alphaproteobacteria</taxon>
        <taxon>Caulobacterales</taxon>
        <taxon>Caulobacteraceae</taxon>
        <taxon>Caulobacter</taxon>
    </lineage>
</organism>
<comment type="similarity">
    <text evidence="1">Belongs to the UPF0246 family.</text>
</comment>
<sequence length="255" mass="28466">MLMVISPAKSLDFTAPQTVLPLTTPELKAQIAELSKVTRKLTAADLKRLMHISDALATLNRERFQAFDPEVEEGLQAVIAFNGDVYAGLNARELDRPALEWAQDHLRILSGLYGVLRPFDALQPYRLEMGTRLKTKKGANLYDFWGETISRTLNQAAEGHADPTLVNLASQEYFGAVDAKALKLPVVTCHFKEEKGGELRVLGFFAKKARGRMARYIIDNRIDQAEALKGFDLDGYRFQPGLSTSADWVFARPQP</sequence>
<keyword id="KW-1185">Reference proteome</keyword>
<reference key="1">
    <citation type="journal article" date="2010" name="J. Bacteriol.">
        <title>The genetic basis of laboratory adaptation in Caulobacter crescentus.</title>
        <authorList>
            <person name="Marks M.E."/>
            <person name="Castro-Rojas C.M."/>
            <person name="Teiling C."/>
            <person name="Du L."/>
            <person name="Kapatral V."/>
            <person name="Walunas T.L."/>
            <person name="Crosson S."/>
        </authorList>
    </citation>
    <scope>NUCLEOTIDE SEQUENCE [LARGE SCALE GENOMIC DNA]</scope>
    <source>
        <strain>NA1000 / CB15N</strain>
    </source>
</reference>
<evidence type="ECO:0000255" key="1">
    <source>
        <dbReference type="HAMAP-Rule" id="MF_00652"/>
    </source>
</evidence>
<name>Y3496_CAUVN</name>
<gene>
    <name type="ordered locus">CCNA_03496</name>
</gene>
<proteinExistence type="inferred from homology"/>
<dbReference type="EMBL" id="CP001340">
    <property type="protein sequence ID" value="ACL96961.1"/>
    <property type="molecule type" value="Genomic_DNA"/>
</dbReference>
<dbReference type="RefSeq" id="YP_002518869.1">
    <property type="nucleotide sequence ID" value="NC_011916.1"/>
</dbReference>
<dbReference type="SMR" id="B8H5B6"/>
<dbReference type="GeneID" id="7332493"/>
<dbReference type="KEGG" id="ccs:CCNA_03496"/>
<dbReference type="PATRIC" id="fig|565050.3.peg.3410"/>
<dbReference type="HOGENOM" id="CLU_061989_0_0_5"/>
<dbReference type="OrthoDB" id="9777133at2"/>
<dbReference type="PhylomeDB" id="B8H5B6"/>
<dbReference type="Proteomes" id="UP000001364">
    <property type="component" value="Chromosome"/>
</dbReference>
<dbReference type="GO" id="GO:0005829">
    <property type="term" value="C:cytosol"/>
    <property type="evidence" value="ECO:0007669"/>
    <property type="project" value="TreeGrafter"/>
</dbReference>
<dbReference type="GO" id="GO:0033194">
    <property type="term" value="P:response to hydroperoxide"/>
    <property type="evidence" value="ECO:0007669"/>
    <property type="project" value="TreeGrafter"/>
</dbReference>
<dbReference type="HAMAP" id="MF_00652">
    <property type="entry name" value="UPF0246"/>
    <property type="match status" value="1"/>
</dbReference>
<dbReference type="InterPro" id="IPR005583">
    <property type="entry name" value="YaaA"/>
</dbReference>
<dbReference type="NCBIfam" id="NF002542">
    <property type="entry name" value="PRK02101.1-3"/>
    <property type="match status" value="1"/>
</dbReference>
<dbReference type="PANTHER" id="PTHR30283:SF4">
    <property type="entry name" value="PEROXIDE STRESS RESISTANCE PROTEIN YAAA"/>
    <property type="match status" value="1"/>
</dbReference>
<dbReference type="PANTHER" id="PTHR30283">
    <property type="entry name" value="PEROXIDE STRESS RESPONSE PROTEIN YAAA"/>
    <property type="match status" value="1"/>
</dbReference>
<dbReference type="Pfam" id="PF03883">
    <property type="entry name" value="H2O2_YaaD"/>
    <property type="match status" value="1"/>
</dbReference>
<accession>B8H5B6</accession>